<proteinExistence type="inferred from homology"/>
<accession>B7UKK1</accession>
<protein>
    <recommendedName>
        <fullName evidence="1">UDP-2,3-diacylglucosamine hydrolase</fullName>
        <ecNumber evidence="1">3.6.1.54</ecNumber>
    </recommendedName>
    <alternativeName>
        <fullName evidence="1">UDP-2,3-diacylglucosamine diphosphatase</fullName>
    </alternativeName>
</protein>
<comment type="function">
    <text evidence="1">Hydrolyzes the pyrophosphate bond of UDP-2,3-diacylglucosamine to yield 2,3-diacylglucosamine 1-phosphate (lipid X) and UMP by catalyzing the attack of water at the alpha-P atom. Involved in the biosynthesis of lipid A, a phosphorylated glycolipid that anchors the lipopolysaccharide to the outer membrane of the cell.</text>
</comment>
<comment type="catalytic activity">
    <reaction evidence="1">
        <text>UDP-2-N,3-O-bis[(3R)-3-hydroxytetradecanoyl]-alpha-D-glucosamine + H2O = 2-N,3-O-bis[(3R)-3-hydroxytetradecanoyl]-alpha-D-glucosaminyl 1-phosphate + UMP + 2 H(+)</text>
        <dbReference type="Rhea" id="RHEA:25213"/>
        <dbReference type="ChEBI" id="CHEBI:15377"/>
        <dbReference type="ChEBI" id="CHEBI:15378"/>
        <dbReference type="ChEBI" id="CHEBI:57865"/>
        <dbReference type="ChEBI" id="CHEBI:57957"/>
        <dbReference type="ChEBI" id="CHEBI:78847"/>
        <dbReference type="EC" id="3.6.1.54"/>
    </reaction>
</comment>
<comment type="cofactor">
    <cofactor evidence="1">
        <name>Mn(2+)</name>
        <dbReference type="ChEBI" id="CHEBI:29035"/>
    </cofactor>
    <text evidence="1">Binds 2 Mn(2+) ions per subunit in a binuclear metal center.</text>
</comment>
<comment type="pathway">
    <text evidence="1">Glycolipid biosynthesis; lipid IV(A) biosynthesis; lipid IV(A) from (3R)-3-hydroxytetradecanoyl-[acyl-carrier-protein] and UDP-N-acetyl-alpha-D-glucosamine: step 4/6.</text>
</comment>
<comment type="subcellular location">
    <subcellularLocation>
        <location evidence="1">Cell inner membrane</location>
        <topology evidence="1">Peripheral membrane protein</topology>
        <orientation evidence="1">Cytoplasmic side</orientation>
    </subcellularLocation>
</comment>
<comment type="similarity">
    <text evidence="1">Belongs to the LpxH family.</text>
</comment>
<organism>
    <name type="scientific">Escherichia coli O127:H6 (strain E2348/69 / EPEC)</name>
    <dbReference type="NCBI Taxonomy" id="574521"/>
    <lineage>
        <taxon>Bacteria</taxon>
        <taxon>Pseudomonadati</taxon>
        <taxon>Pseudomonadota</taxon>
        <taxon>Gammaproteobacteria</taxon>
        <taxon>Enterobacterales</taxon>
        <taxon>Enterobacteriaceae</taxon>
        <taxon>Escherichia</taxon>
    </lineage>
</organism>
<keyword id="KW-0997">Cell inner membrane</keyword>
<keyword id="KW-1003">Cell membrane</keyword>
<keyword id="KW-0378">Hydrolase</keyword>
<keyword id="KW-0441">Lipid A biosynthesis</keyword>
<keyword id="KW-0444">Lipid biosynthesis</keyword>
<keyword id="KW-0443">Lipid metabolism</keyword>
<keyword id="KW-0464">Manganese</keyword>
<keyword id="KW-0472">Membrane</keyword>
<keyword id="KW-0479">Metal-binding</keyword>
<keyword id="KW-1185">Reference proteome</keyword>
<gene>
    <name evidence="1" type="primary">lpxH</name>
    <name type="ordered locus">E2348C_0457</name>
</gene>
<sequence length="240" mass="26902">MATLFIADLHLCVEEPAITAGFLRFLAGEARKADALYILGDLFEAWIGDDDPNPLHHQMAAAIKAVSDSGVPCYFIHGNRDFLLGKRFARESGMTLLPEEKVLELYGRRVLIMHGDTLCTDDAGYQAFRAKVHKPWLQTLFLALPLFVRKRIAARMRANSKEANSSKSLAIMDVNQNAVVNAMEKHQVQWLIHGHTHRPAVHELIANQQPAFRVVLGAWHTEGSMVKVTADDVELIHFPF</sequence>
<dbReference type="EC" id="3.6.1.54" evidence="1"/>
<dbReference type="EMBL" id="FM180568">
    <property type="protein sequence ID" value="CAS08005.1"/>
    <property type="molecule type" value="Genomic_DNA"/>
</dbReference>
<dbReference type="RefSeq" id="WP_000212243.1">
    <property type="nucleotide sequence ID" value="NC_011601.1"/>
</dbReference>
<dbReference type="SMR" id="B7UKK1"/>
<dbReference type="KEGG" id="ecg:E2348C_0457"/>
<dbReference type="HOGENOM" id="CLU_074586_0_0_6"/>
<dbReference type="UniPathway" id="UPA00359">
    <property type="reaction ID" value="UER00480"/>
</dbReference>
<dbReference type="Proteomes" id="UP000008205">
    <property type="component" value="Chromosome"/>
</dbReference>
<dbReference type="GO" id="GO:0005737">
    <property type="term" value="C:cytoplasm"/>
    <property type="evidence" value="ECO:0007669"/>
    <property type="project" value="InterPro"/>
</dbReference>
<dbReference type="GO" id="GO:0019897">
    <property type="term" value="C:extrinsic component of plasma membrane"/>
    <property type="evidence" value="ECO:0007669"/>
    <property type="project" value="UniProtKB-UniRule"/>
</dbReference>
<dbReference type="GO" id="GO:0030145">
    <property type="term" value="F:manganese ion binding"/>
    <property type="evidence" value="ECO:0007669"/>
    <property type="project" value="UniProtKB-UniRule"/>
</dbReference>
<dbReference type="GO" id="GO:0008758">
    <property type="term" value="F:UDP-2,3-diacylglucosamine hydrolase activity"/>
    <property type="evidence" value="ECO:0007669"/>
    <property type="project" value="UniProtKB-UniRule"/>
</dbReference>
<dbReference type="GO" id="GO:0009245">
    <property type="term" value="P:lipid A biosynthetic process"/>
    <property type="evidence" value="ECO:0007669"/>
    <property type="project" value="UniProtKB-UniRule"/>
</dbReference>
<dbReference type="CDD" id="cd07398">
    <property type="entry name" value="MPP_YbbF-LpxH"/>
    <property type="match status" value="1"/>
</dbReference>
<dbReference type="FunFam" id="3.60.21.10:FF:000012">
    <property type="entry name" value="UDP-2,3-diacylglucosamine hydrolase"/>
    <property type="match status" value="1"/>
</dbReference>
<dbReference type="Gene3D" id="3.60.21.10">
    <property type="match status" value="1"/>
</dbReference>
<dbReference type="HAMAP" id="MF_00575">
    <property type="entry name" value="LpxH"/>
    <property type="match status" value="1"/>
</dbReference>
<dbReference type="InterPro" id="IPR004843">
    <property type="entry name" value="Calcineurin-like_PHP_ApaH"/>
</dbReference>
<dbReference type="InterPro" id="IPR043461">
    <property type="entry name" value="LpxH-like"/>
</dbReference>
<dbReference type="InterPro" id="IPR029052">
    <property type="entry name" value="Metallo-depent_PP-like"/>
</dbReference>
<dbReference type="InterPro" id="IPR010138">
    <property type="entry name" value="UDP-diacylglucosamine_Hdrlase"/>
</dbReference>
<dbReference type="NCBIfam" id="TIGR01854">
    <property type="entry name" value="lipid_A_lpxH"/>
    <property type="match status" value="1"/>
</dbReference>
<dbReference type="NCBIfam" id="NF003743">
    <property type="entry name" value="PRK05340.1"/>
    <property type="match status" value="1"/>
</dbReference>
<dbReference type="PANTHER" id="PTHR34990:SF1">
    <property type="entry name" value="UDP-2,3-DIACYLGLUCOSAMINE HYDROLASE"/>
    <property type="match status" value="1"/>
</dbReference>
<dbReference type="PANTHER" id="PTHR34990">
    <property type="entry name" value="UDP-2,3-DIACYLGLUCOSAMINE HYDROLASE-RELATED"/>
    <property type="match status" value="1"/>
</dbReference>
<dbReference type="Pfam" id="PF00149">
    <property type="entry name" value="Metallophos"/>
    <property type="match status" value="1"/>
</dbReference>
<dbReference type="SUPFAM" id="SSF56300">
    <property type="entry name" value="Metallo-dependent phosphatases"/>
    <property type="match status" value="1"/>
</dbReference>
<evidence type="ECO:0000255" key="1">
    <source>
        <dbReference type="HAMAP-Rule" id="MF_00575"/>
    </source>
</evidence>
<name>LPXH_ECO27</name>
<reference key="1">
    <citation type="journal article" date="2009" name="J. Bacteriol.">
        <title>Complete genome sequence and comparative genome analysis of enteropathogenic Escherichia coli O127:H6 strain E2348/69.</title>
        <authorList>
            <person name="Iguchi A."/>
            <person name="Thomson N.R."/>
            <person name="Ogura Y."/>
            <person name="Saunders D."/>
            <person name="Ooka T."/>
            <person name="Henderson I.R."/>
            <person name="Harris D."/>
            <person name="Asadulghani M."/>
            <person name="Kurokawa K."/>
            <person name="Dean P."/>
            <person name="Kenny B."/>
            <person name="Quail M.A."/>
            <person name="Thurston S."/>
            <person name="Dougan G."/>
            <person name="Hayashi T."/>
            <person name="Parkhill J."/>
            <person name="Frankel G."/>
        </authorList>
    </citation>
    <scope>NUCLEOTIDE SEQUENCE [LARGE SCALE GENOMIC DNA]</scope>
    <source>
        <strain>E2348/69 / EPEC</strain>
    </source>
</reference>
<feature type="chain" id="PRO_1000191028" description="UDP-2,3-diacylglucosamine hydrolase">
    <location>
        <begin position="1"/>
        <end position="240"/>
    </location>
</feature>
<feature type="binding site" evidence="1">
    <location>
        <position position="8"/>
    </location>
    <ligand>
        <name>Mn(2+)</name>
        <dbReference type="ChEBI" id="CHEBI:29035"/>
        <label>1</label>
    </ligand>
</feature>
<feature type="binding site" evidence="1">
    <location>
        <position position="10"/>
    </location>
    <ligand>
        <name>Mn(2+)</name>
        <dbReference type="ChEBI" id="CHEBI:29035"/>
        <label>1</label>
    </ligand>
</feature>
<feature type="binding site" evidence="1">
    <location>
        <position position="41"/>
    </location>
    <ligand>
        <name>Mn(2+)</name>
        <dbReference type="ChEBI" id="CHEBI:29035"/>
        <label>1</label>
    </ligand>
</feature>
<feature type="binding site" evidence="1">
    <location>
        <position position="41"/>
    </location>
    <ligand>
        <name>Mn(2+)</name>
        <dbReference type="ChEBI" id="CHEBI:29035"/>
        <label>2</label>
    </ligand>
</feature>
<feature type="binding site" evidence="1">
    <location>
        <begin position="79"/>
        <end position="80"/>
    </location>
    <ligand>
        <name>substrate</name>
    </ligand>
</feature>
<feature type="binding site" evidence="1">
    <location>
        <position position="79"/>
    </location>
    <ligand>
        <name>Mn(2+)</name>
        <dbReference type="ChEBI" id="CHEBI:29035"/>
        <label>2</label>
    </ligand>
</feature>
<feature type="binding site" evidence="1">
    <location>
        <position position="114"/>
    </location>
    <ligand>
        <name>Mn(2+)</name>
        <dbReference type="ChEBI" id="CHEBI:29035"/>
        <label>2</label>
    </ligand>
</feature>
<feature type="binding site" evidence="1">
    <location>
        <position position="122"/>
    </location>
    <ligand>
        <name>substrate</name>
    </ligand>
</feature>
<feature type="binding site" evidence="1">
    <location>
        <position position="160"/>
    </location>
    <ligand>
        <name>substrate</name>
    </ligand>
</feature>
<feature type="binding site" evidence="1">
    <location>
        <position position="164"/>
    </location>
    <ligand>
        <name>substrate</name>
    </ligand>
</feature>
<feature type="binding site" evidence="1">
    <location>
        <position position="167"/>
    </location>
    <ligand>
        <name>substrate</name>
    </ligand>
</feature>
<feature type="binding site" evidence="1">
    <location>
        <position position="195"/>
    </location>
    <ligand>
        <name>Mn(2+)</name>
        <dbReference type="ChEBI" id="CHEBI:29035"/>
        <label>2</label>
    </ligand>
</feature>
<feature type="binding site" evidence="1">
    <location>
        <position position="195"/>
    </location>
    <ligand>
        <name>substrate</name>
    </ligand>
</feature>
<feature type="binding site" evidence="1">
    <location>
        <position position="197"/>
    </location>
    <ligand>
        <name>Mn(2+)</name>
        <dbReference type="ChEBI" id="CHEBI:29035"/>
        <label>1</label>
    </ligand>
</feature>